<protein>
    <recommendedName>
        <fullName>Pentatricopeptide repeat-containing protein At4g15720</fullName>
    </recommendedName>
</protein>
<evidence type="ECO:0000305" key="1"/>
<keyword id="KW-1185">Reference proteome</keyword>
<keyword id="KW-0677">Repeat</keyword>
<comment type="similarity">
    <text evidence="1">Belongs to the PPR family. PCMP-H subfamily.</text>
</comment>
<comment type="sequence caution" evidence="1">
    <conflict type="erroneous gene model prediction">
        <sequence resource="EMBL-CDS" id="CAB10350"/>
    </conflict>
</comment>
<comment type="sequence caution" evidence="1">
    <conflict type="erroneous gene model prediction">
        <sequence resource="EMBL-CDS" id="CAB78614"/>
    </conflict>
</comment>
<comment type="online information" name="Pentatricopeptide repeat proteins">
    <link uri="https://ppr.plantenergy.uwa.edu.au"/>
</comment>
<name>PP313_ARATH</name>
<proteinExistence type="evidence at transcript level"/>
<gene>
    <name type="primary">PCMP-H1</name>
    <name type="ordered locus">At4g15720</name>
    <name type="ORF">dl3900w</name>
    <name type="ORF">FCAALL.369</name>
</gene>
<feature type="chain" id="PRO_0000363431" description="Pentatricopeptide repeat-containing protein At4g15720">
    <location>
        <begin position="1"/>
        <end position="616"/>
    </location>
</feature>
<feature type="repeat" description="PPR 1">
    <location>
        <begin position="63"/>
        <end position="93"/>
    </location>
</feature>
<feature type="repeat" description="PPR 2">
    <location>
        <begin position="94"/>
        <end position="128"/>
    </location>
</feature>
<feature type="repeat" description="PPR 3">
    <location>
        <begin position="130"/>
        <end position="164"/>
    </location>
</feature>
<feature type="repeat" description="PPR 4">
    <location>
        <begin position="165"/>
        <end position="199"/>
    </location>
</feature>
<feature type="repeat" description="PPR 5">
    <location>
        <begin position="200"/>
        <end position="228"/>
    </location>
</feature>
<feature type="repeat" description="PPR 6">
    <location>
        <begin position="235"/>
        <end position="269"/>
    </location>
</feature>
<feature type="repeat" description="PPR 7">
    <location>
        <begin position="270"/>
        <end position="300"/>
    </location>
</feature>
<feature type="repeat" description="PPR 8">
    <location>
        <begin position="301"/>
        <end position="335"/>
    </location>
</feature>
<feature type="repeat" description="PPR 9">
    <location>
        <begin position="336"/>
        <end position="371"/>
    </location>
</feature>
<feature type="repeat" description="PPR 10">
    <location>
        <begin position="372"/>
        <end position="402"/>
    </location>
</feature>
<feature type="region of interest" description="Type E motif">
    <location>
        <begin position="409"/>
        <end position="484"/>
    </location>
</feature>
<feature type="region of interest" description="Type E(+) motif">
    <location>
        <begin position="485"/>
        <end position="515"/>
    </location>
</feature>
<feature type="region of interest" description="Type DYW motif">
    <location>
        <begin position="522"/>
        <end position="616"/>
    </location>
</feature>
<reference key="1">
    <citation type="journal article" date="1998" name="Nature">
        <title>Analysis of 1.9 Mb of contiguous sequence from chromosome 4 of Arabidopsis thaliana.</title>
        <authorList>
            <person name="Bevan M."/>
            <person name="Bancroft I."/>
            <person name="Bent E."/>
            <person name="Love K."/>
            <person name="Goodman H.M."/>
            <person name="Dean C."/>
            <person name="Bergkamp R."/>
            <person name="Dirkse W."/>
            <person name="van Staveren M."/>
            <person name="Stiekema W."/>
            <person name="Drost L."/>
            <person name="Ridley P."/>
            <person name="Hudson S.-A."/>
            <person name="Patel K."/>
            <person name="Murphy G."/>
            <person name="Piffanelli P."/>
            <person name="Wedler H."/>
            <person name="Wedler E."/>
            <person name="Wambutt R."/>
            <person name="Weitzenegger T."/>
            <person name="Pohl T."/>
            <person name="Terryn N."/>
            <person name="Gielen J."/>
            <person name="Villarroel R."/>
            <person name="De Clercq R."/>
            <person name="van Montagu M."/>
            <person name="Lecharny A."/>
            <person name="Aubourg S."/>
            <person name="Gy I."/>
            <person name="Kreis M."/>
            <person name="Lao N."/>
            <person name="Kavanagh T."/>
            <person name="Hempel S."/>
            <person name="Kotter P."/>
            <person name="Entian K.-D."/>
            <person name="Rieger M."/>
            <person name="Schaefer M."/>
            <person name="Funk B."/>
            <person name="Mueller-Auer S."/>
            <person name="Silvey M."/>
            <person name="James R."/>
            <person name="Monfort A."/>
            <person name="Pons A."/>
            <person name="Puigdomenech P."/>
            <person name="Douka A."/>
            <person name="Voukelatou E."/>
            <person name="Milioni D."/>
            <person name="Hatzopoulos P."/>
            <person name="Piravandi E."/>
            <person name="Obermaier B."/>
            <person name="Hilbert H."/>
            <person name="Duesterhoeft A."/>
            <person name="Moores T."/>
            <person name="Jones J.D.G."/>
            <person name="Eneva T."/>
            <person name="Palme K."/>
            <person name="Benes V."/>
            <person name="Rechmann S."/>
            <person name="Ansorge W."/>
            <person name="Cooke R."/>
            <person name="Berger C."/>
            <person name="Delseny M."/>
            <person name="Voet M."/>
            <person name="Volckaert G."/>
            <person name="Mewes H.-W."/>
            <person name="Klosterman S."/>
            <person name="Schueller C."/>
            <person name="Chalwatzis N."/>
        </authorList>
    </citation>
    <scope>NUCLEOTIDE SEQUENCE [LARGE SCALE GENOMIC DNA]</scope>
    <source>
        <strain>cv. Columbia</strain>
    </source>
</reference>
<reference key="2">
    <citation type="journal article" date="1999" name="Nature">
        <title>Sequence and analysis of chromosome 4 of the plant Arabidopsis thaliana.</title>
        <authorList>
            <person name="Mayer K.F.X."/>
            <person name="Schueller C."/>
            <person name="Wambutt R."/>
            <person name="Murphy G."/>
            <person name="Volckaert G."/>
            <person name="Pohl T."/>
            <person name="Duesterhoeft A."/>
            <person name="Stiekema W."/>
            <person name="Entian K.-D."/>
            <person name="Terryn N."/>
            <person name="Harris B."/>
            <person name="Ansorge W."/>
            <person name="Brandt P."/>
            <person name="Grivell L.A."/>
            <person name="Rieger M."/>
            <person name="Weichselgartner M."/>
            <person name="de Simone V."/>
            <person name="Obermaier B."/>
            <person name="Mache R."/>
            <person name="Mueller M."/>
            <person name="Kreis M."/>
            <person name="Delseny M."/>
            <person name="Puigdomenech P."/>
            <person name="Watson M."/>
            <person name="Schmidtheini T."/>
            <person name="Reichert B."/>
            <person name="Portetelle D."/>
            <person name="Perez-Alonso M."/>
            <person name="Boutry M."/>
            <person name="Bancroft I."/>
            <person name="Vos P."/>
            <person name="Hoheisel J."/>
            <person name="Zimmermann W."/>
            <person name="Wedler H."/>
            <person name="Ridley P."/>
            <person name="Langham S.-A."/>
            <person name="McCullagh B."/>
            <person name="Bilham L."/>
            <person name="Robben J."/>
            <person name="van der Schueren J."/>
            <person name="Grymonprez B."/>
            <person name="Chuang Y.-J."/>
            <person name="Vandenbussche F."/>
            <person name="Braeken M."/>
            <person name="Weltjens I."/>
            <person name="Voet M."/>
            <person name="Bastiaens I."/>
            <person name="Aert R."/>
            <person name="Defoor E."/>
            <person name="Weitzenegger T."/>
            <person name="Bothe G."/>
            <person name="Ramsperger U."/>
            <person name="Hilbert H."/>
            <person name="Braun M."/>
            <person name="Holzer E."/>
            <person name="Brandt A."/>
            <person name="Peters S."/>
            <person name="van Staveren M."/>
            <person name="Dirkse W."/>
            <person name="Mooijman P."/>
            <person name="Klein Lankhorst R."/>
            <person name="Rose M."/>
            <person name="Hauf J."/>
            <person name="Koetter P."/>
            <person name="Berneiser S."/>
            <person name="Hempel S."/>
            <person name="Feldpausch M."/>
            <person name="Lamberth S."/>
            <person name="Van den Daele H."/>
            <person name="De Keyser A."/>
            <person name="Buysshaert C."/>
            <person name="Gielen J."/>
            <person name="Villarroel R."/>
            <person name="De Clercq R."/>
            <person name="van Montagu M."/>
            <person name="Rogers J."/>
            <person name="Cronin A."/>
            <person name="Quail M.A."/>
            <person name="Bray-Allen S."/>
            <person name="Clark L."/>
            <person name="Doggett J."/>
            <person name="Hall S."/>
            <person name="Kay M."/>
            <person name="Lennard N."/>
            <person name="McLay K."/>
            <person name="Mayes R."/>
            <person name="Pettett A."/>
            <person name="Rajandream M.A."/>
            <person name="Lyne M."/>
            <person name="Benes V."/>
            <person name="Rechmann S."/>
            <person name="Borkova D."/>
            <person name="Bloecker H."/>
            <person name="Scharfe M."/>
            <person name="Grimm M."/>
            <person name="Loehnert T.-H."/>
            <person name="Dose S."/>
            <person name="de Haan M."/>
            <person name="Maarse A.C."/>
            <person name="Schaefer M."/>
            <person name="Mueller-Auer S."/>
            <person name="Gabel C."/>
            <person name="Fuchs M."/>
            <person name="Fartmann B."/>
            <person name="Granderath K."/>
            <person name="Dauner D."/>
            <person name="Herzl A."/>
            <person name="Neumann S."/>
            <person name="Argiriou A."/>
            <person name="Vitale D."/>
            <person name="Liguori R."/>
            <person name="Piravandi E."/>
            <person name="Massenet O."/>
            <person name="Quigley F."/>
            <person name="Clabauld G."/>
            <person name="Muendlein A."/>
            <person name="Felber R."/>
            <person name="Schnabl S."/>
            <person name="Hiller R."/>
            <person name="Schmidt W."/>
            <person name="Lecharny A."/>
            <person name="Aubourg S."/>
            <person name="Chefdor F."/>
            <person name="Cooke R."/>
            <person name="Berger C."/>
            <person name="Monfort A."/>
            <person name="Casacuberta E."/>
            <person name="Gibbons T."/>
            <person name="Weber N."/>
            <person name="Vandenbol M."/>
            <person name="Bargues M."/>
            <person name="Terol J."/>
            <person name="Torres A."/>
            <person name="Perez-Perez A."/>
            <person name="Purnelle B."/>
            <person name="Bent E."/>
            <person name="Johnson S."/>
            <person name="Tacon D."/>
            <person name="Jesse T."/>
            <person name="Heijnen L."/>
            <person name="Schwarz S."/>
            <person name="Scholler P."/>
            <person name="Heber S."/>
            <person name="Francs P."/>
            <person name="Bielke C."/>
            <person name="Frishman D."/>
            <person name="Haase D."/>
            <person name="Lemcke K."/>
            <person name="Mewes H.-W."/>
            <person name="Stocker S."/>
            <person name="Zaccaria P."/>
            <person name="Bevan M."/>
            <person name="Wilson R.K."/>
            <person name="de la Bastide M."/>
            <person name="Habermann K."/>
            <person name="Parnell L."/>
            <person name="Dedhia N."/>
            <person name="Gnoj L."/>
            <person name="Schutz K."/>
            <person name="Huang E."/>
            <person name="Spiegel L."/>
            <person name="Sekhon M."/>
            <person name="Murray J."/>
            <person name="Sheet P."/>
            <person name="Cordes M."/>
            <person name="Abu-Threideh J."/>
            <person name="Stoneking T."/>
            <person name="Kalicki J."/>
            <person name="Graves T."/>
            <person name="Harmon G."/>
            <person name="Edwards J."/>
            <person name="Latreille P."/>
            <person name="Courtney L."/>
            <person name="Cloud J."/>
            <person name="Abbott A."/>
            <person name="Scott K."/>
            <person name="Johnson D."/>
            <person name="Minx P."/>
            <person name="Bentley D."/>
            <person name="Fulton B."/>
            <person name="Miller N."/>
            <person name="Greco T."/>
            <person name="Kemp K."/>
            <person name="Kramer J."/>
            <person name="Fulton L."/>
            <person name="Mardis E."/>
            <person name="Dante M."/>
            <person name="Pepin K."/>
            <person name="Hillier L.W."/>
            <person name="Nelson J."/>
            <person name="Spieth J."/>
            <person name="Ryan E."/>
            <person name="Andrews S."/>
            <person name="Geisel C."/>
            <person name="Layman D."/>
            <person name="Du H."/>
            <person name="Ali J."/>
            <person name="Berghoff A."/>
            <person name="Jones K."/>
            <person name="Drone K."/>
            <person name="Cotton M."/>
            <person name="Joshu C."/>
            <person name="Antonoiu B."/>
            <person name="Zidanic M."/>
            <person name="Strong C."/>
            <person name="Sun H."/>
            <person name="Lamar B."/>
            <person name="Yordan C."/>
            <person name="Ma P."/>
            <person name="Zhong J."/>
            <person name="Preston R."/>
            <person name="Vil D."/>
            <person name="Shekher M."/>
            <person name="Matero A."/>
            <person name="Shah R."/>
            <person name="Swaby I.K."/>
            <person name="O'Shaughnessy A."/>
            <person name="Rodriguez M."/>
            <person name="Hoffman J."/>
            <person name="Till S."/>
            <person name="Granat S."/>
            <person name="Shohdy N."/>
            <person name="Hasegawa A."/>
            <person name="Hameed A."/>
            <person name="Lodhi M."/>
            <person name="Johnson A."/>
            <person name="Chen E."/>
            <person name="Marra M.A."/>
            <person name="Martienssen R."/>
            <person name="McCombie W.R."/>
        </authorList>
    </citation>
    <scope>NUCLEOTIDE SEQUENCE [LARGE SCALE GENOMIC DNA]</scope>
    <source>
        <strain>cv. Columbia</strain>
    </source>
</reference>
<reference key="3">
    <citation type="journal article" date="2017" name="Plant J.">
        <title>Araport11: a complete reannotation of the Arabidopsis thaliana reference genome.</title>
        <authorList>
            <person name="Cheng C.Y."/>
            <person name="Krishnakumar V."/>
            <person name="Chan A.P."/>
            <person name="Thibaud-Nissen F."/>
            <person name="Schobel S."/>
            <person name="Town C.D."/>
        </authorList>
    </citation>
    <scope>GENOME REANNOTATION</scope>
    <source>
        <strain>cv. Columbia</strain>
    </source>
</reference>
<reference key="4">
    <citation type="journal article" date="2003" name="Science">
        <title>Empirical analysis of transcriptional activity in the Arabidopsis genome.</title>
        <authorList>
            <person name="Yamada K."/>
            <person name="Lim J."/>
            <person name="Dale J.M."/>
            <person name="Chen H."/>
            <person name="Shinn P."/>
            <person name="Palm C.J."/>
            <person name="Southwick A.M."/>
            <person name="Wu H.C."/>
            <person name="Kim C.J."/>
            <person name="Nguyen M."/>
            <person name="Pham P.K."/>
            <person name="Cheuk R.F."/>
            <person name="Karlin-Newmann G."/>
            <person name="Liu S.X."/>
            <person name="Lam B."/>
            <person name="Sakano H."/>
            <person name="Wu T."/>
            <person name="Yu G."/>
            <person name="Miranda M."/>
            <person name="Quach H.L."/>
            <person name="Tripp M."/>
            <person name="Chang C.H."/>
            <person name="Lee J.M."/>
            <person name="Toriumi M.J."/>
            <person name="Chan M.M."/>
            <person name="Tang C.C."/>
            <person name="Onodera C.S."/>
            <person name="Deng J.M."/>
            <person name="Akiyama K."/>
            <person name="Ansari Y."/>
            <person name="Arakawa T."/>
            <person name="Banh J."/>
            <person name="Banno F."/>
            <person name="Bowser L."/>
            <person name="Brooks S.Y."/>
            <person name="Carninci P."/>
            <person name="Chao Q."/>
            <person name="Choy N."/>
            <person name="Enju A."/>
            <person name="Goldsmith A.D."/>
            <person name="Gurjal M."/>
            <person name="Hansen N.F."/>
            <person name="Hayashizaki Y."/>
            <person name="Johnson-Hopson C."/>
            <person name="Hsuan V.W."/>
            <person name="Iida K."/>
            <person name="Karnes M."/>
            <person name="Khan S."/>
            <person name="Koesema E."/>
            <person name="Ishida J."/>
            <person name="Jiang P.X."/>
            <person name="Jones T."/>
            <person name="Kawai J."/>
            <person name="Kamiya A."/>
            <person name="Meyers C."/>
            <person name="Nakajima M."/>
            <person name="Narusaka M."/>
            <person name="Seki M."/>
            <person name="Sakurai T."/>
            <person name="Satou M."/>
            <person name="Tamse R."/>
            <person name="Vaysberg M."/>
            <person name="Wallender E.K."/>
            <person name="Wong C."/>
            <person name="Yamamura Y."/>
            <person name="Yuan S."/>
            <person name="Shinozaki K."/>
            <person name="Davis R.W."/>
            <person name="Theologis A."/>
            <person name="Ecker J.R."/>
        </authorList>
    </citation>
    <scope>NUCLEOTIDE SEQUENCE [LARGE SCALE MRNA]</scope>
    <source>
        <strain>cv. Columbia</strain>
    </source>
</reference>
<reference key="5">
    <citation type="journal article" date="2000" name="Plant Mol. Biol.">
        <title>In Arabidopsis thaliana, 1% of the genome codes for a novel protein family unique to plants.</title>
        <authorList>
            <person name="Aubourg S."/>
            <person name="Boudet N."/>
            <person name="Kreis M."/>
            <person name="Lecharny A."/>
        </authorList>
    </citation>
    <scope>GENE FAMILY</scope>
</reference>
<reference key="6">
    <citation type="journal article" date="2004" name="Plant Cell">
        <title>Genome-wide analysis of Arabidopsis pentatricopeptide repeat proteins reveals their essential role in organelle biogenesis.</title>
        <authorList>
            <person name="Lurin C."/>
            <person name="Andres C."/>
            <person name="Aubourg S."/>
            <person name="Bellaoui M."/>
            <person name="Bitton F."/>
            <person name="Bruyere C."/>
            <person name="Caboche M."/>
            <person name="Debast C."/>
            <person name="Gualberto J."/>
            <person name="Hoffmann B."/>
            <person name="Lecharny A."/>
            <person name="Le Ret M."/>
            <person name="Martin-Magniette M.-L."/>
            <person name="Mireau H."/>
            <person name="Peeters N."/>
            <person name="Renou J.-P."/>
            <person name="Szurek B."/>
            <person name="Taconnat L."/>
            <person name="Small I."/>
        </authorList>
    </citation>
    <scope>GENE FAMILY</scope>
</reference>
<accession>Q8VYH0</accession>
<accession>O23423</accession>
<dbReference type="EMBL" id="Z97339">
    <property type="protein sequence ID" value="CAB10350.1"/>
    <property type="status" value="ALT_SEQ"/>
    <property type="molecule type" value="Genomic_DNA"/>
</dbReference>
<dbReference type="EMBL" id="AL161542">
    <property type="protein sequence ID" value="CAB78614.1"/>
    <property type="status" value="ALT_SEQ"/>
    <property type="molecule type" value="Genomic_DNA"/>
</dbReference>
<dbReference type="EMBL" id="CP002687">
    <property type="protein sequence ID" value="AEE83640.1"/>
    <property type="molecule type" value="Genomic_DNA"/>
</dbReference>
<dbReference type="EMBL" id="AY072074">
    <property type="protein sequence ID" value="AAL59897.1"/>
    <property type="molecule type" value="mRNA"/>
</dbReference>
<dbReference type="EMBL" id="AY096603">
    <property type="protein sequence ID" value="AAM20253.1"/>
    <property type="molecule type" value="mRNA"/>
</dbReference>
<dbReference type="PIR" id="D71422">
    <property type="entry name" value="D71422"/>
</dbReference>
<dbReference type="RefSeq" id="NP_193307.2">
    <property type="nucleotide sequence ID" value="NM_117663.4"/>
</dbReference>
<dbReference type="SMR" id="Q8VYH0"/>
<dbReference type="FunCoup" id="Q8VYH0">
    <property type="interactions" value="3"/>
</dbReference>
<dbReference type="STRING" id="3702.Q8VYH0"/>
<dbReference type="PaxDb" id="3702-AT4G15720.1"/>
<dbReference type="EnsemblPlants" id="AT4G15720.1">
    <property type="protein sequence ID" value="AT4G15720.1"/>
    <property type="gene ID" value="AT4G15720"/>
</dbReference>
<dbReference type="GeneID" id="827250"/>
<dbReference type="Gramene" id="AT4G15720.1">
    <property type="protein sequence ID" value="AT4G15720.1"/>
    <property type="gene ID" value="AT4G15720"/>
</dbReference>
<dbReference type="KEGG" id="ath:AT4G15720"/>
<dbReference type="Araport" id="AT4G15720"/>
<dbReference type="TAIR" id="AT4G15720">
    <property type="gene designation" value="REME2"/>
</dbReference>
<dbReference type="eggNOG" id="KOG4197">
    <property type="taxonomic scope" value="Eukaryota"/>
</dbReference>
<dbReference type="HOGENOM" id="CLU_002706_37_8_1"/>
<dbReference type="InParanoid" id="Q8VYH0"/>
<dbReference type="OMA" id="HLINCYV"/>
<dbReference type="PhylomeDB" id="Q8VYH0"/>
<dbReference type="PRO" id="PR:Q8VYH0"/>
<dbReference type="Proteomes" id="UP000006548">
    <property type="component" value="Chromosome 4"/>
</dbReference>
<dbReference type="ExpressionAtlas" id="Q8VYH0">
    <property type="expression patterns" value="baseline and differential"/>
</dbReference>
<dbReference type="GO" id="GO:0003723">
    <property type="term" value="F:RNA binding"/>
    <property type="evidence" value="ECO:0007669"/>
    <property type="project" value="InterPro"/>
</dbReference>
<dbReference type="GO" id="GO:0008270">
    <property type="term" value="F:zinc ion binding"/>
    <property type="evidence" value="ECO:0007669"/>
    <property type="project" value="InterPro"/>
</dbReference>
<dbReference type="GO" id="GO:0009451">
    <property type="term" value="P:RNA modification"/>
    <property type="evidence" value="ECO:0007669"/>
    <property type="project" value="InterPro"/>
</dbReference>
<dbReference type="FunFam" id="1.25.40.10:FF:001969">
    <property type="entry name" value="Pentatricopeptide repeat-containing protein At1g06140, mitochondrial"/>
    <property type="match status" value="1"/>
</dbReference>
<dbReference type="FunFam" id="1.25.40.10:FF:000976">
    <property type="entry name" value="Pentatricopeptide repeat-containing protein At4g15720"/>
    <property type="match status" value="1"/>
</dbReference>
<dbReference type="FunFam" id="1.25.40.10:FF:003234">
    <property type="entry name" value="Pentatricopeptide repeat-containing protein At4g15720"/>
    <property type="match status" value="1"/>
</dbReference>
<dbReference type="FunFam" id="1.25.40.10:FF:000475">
    <property type="entry name" value="Pentatricopeptide repeat-containing protein At5g40410, mitochondrial"/>
    <property type="match status" value="1"/>
</dbReference>
<dbReference type="Gene3D" id="1.25.40.10">
    <property type="entry name" value="Tetratricopeptide repeat domain"/>
    <property type="match status" value="4"/>
</dbReference>
<dbReference type="InterPro" id="IPR032867">
    <property type="entry name" value="DYW_dom"/>
</dbReference>
<dbReference type="InterPro" id="IPR046848">
    <property type="entry name" value="E_motif"/>
</dbReference>
<dbReference type="InterPro" id="IPR002885">
    <property type="entry name" value="Pentatricopeptide_rpt"/>
</dbReference>
<dbReference type="InterPro" id="IPR046960">
    <property type="entry name" value="PPR_At4g14850-like_plant"/>
</dbReference>
<dbReference type="InterPro" id="IPR011990">
    <property type="entry name" value="TPR-like_helical_dom_sf"/>
</dbReference>
<dbReference type="NCBIfam" id="TIGR00756">
    <property type="entry name" value="PPR"/>
    <property type="match status" value="2"/>
</dbReference>
<dbReference type="PANTHER" id="PTHR47926">
    <property type="entry name" value="PENTATRICOPEPTIDE REPEAT-CONTAINING PROTEIN"/>
    <property type="match status" value="1"/>
</dbReference>
<dbReference type="PANTHER" id="PTHR47926:SF368">
    <property type="entry name" value="TETRATRICOPEPTIDE REPEAT-LIKE SUPERFAMILY PROTEIN"/>
    <property type="match status" value="1"/>
</dbReference>
<dbReference type="Pfam" id="PF14432">
    <property type="entry name" value="DYW_deaminase"/>
    <property type="match status" value="1"/>
</dbReference>
<dbReference type="Pfam" id="PF20431">
    <property type="entry name" value="E_motif"/>
    <property type="match status" value="1"/>
</dbReference>
<dbReference type="Pfam" id="PF01535">
    <property type="entry name" value="PPR"/>
    <property type="match status" value="5"/>
</dbReference>
<dbReference type="Pfam" id="PF13041">
    <property type="entry name" value="PPR_2"/>
    <property type="match status" value="2"/>
</dbReference>
<dbReference type="PROSITE" id="PS51375">
    <property type="entry name" value="PPR"/>
    <property type="match status" value="11"/>
</dbReference>
<sequence length="616" mass="68655">MKKGFIQNVHLAPATSLFVPQYKNDFFHLKTKAFLVHKLSESTNAAFTNLLHTLTLKLGFASDTFTVNHLVISYVKLKEINTARKLFDEMCEPNVVSWTSVISGYNDMGKPQNALSMFQKMHEDRPVPPNEYTFASVFKACSALAESRIGKNIHARLEISGLRRNIVVSSSLVDMYGKCNDVETARRVFDSMIGYGRNVVSWTSMITAYAQNARGHEAIELFRSFNAALTSDRANQFMLASVISACSSLGRLQWGKVAHGLVTRGGYESNTVVATSLLDMYAKCGSLSCAEKIFLRIRCHSVISYTSMIMAKAKHGLGEAAVKLFDEMVAGRINPNYVTLLGVLHACSHSGLVNEGLEYLSLMAEKYGVVPDSRHYTCVVDMLGRFGRVDEAYELAKTIEVGAEQGALLWGALLSAGRLHGRVEIVSEASKRLIQSNQQVTSAYIALSNAYAVSGGWEDSESLRLEMKRSGNVKERACSWIENKDSVYVFHAGDLSCDESGEIERFLKDLEKRMKERGHRGSSSMITTSSSVFVDVDEEAKDEMVSLHCERLALAYGLLHLPAGSTIRIMNNLRMCRDCHEAFKLISEIVEREIVVRDVNRFHCFKNGSCTCRDYW</sequence>
<organism>
    <name type="scientific">Arabidopsis thaliana</name>
    <name type="common">Mouse-ear cress</name>
    <dbReference type="NCBI Taxonomy" id="3702"/>
    <lineage>
        <taxon>Eukaryota</taxon>
        <taxon>Viridiplantae</taxon>
        <taxon>Streptophyta</taxon>
        <taxon>Embryophyta</taxon>
        <taxon>Tracheophyta</taxon>
        <taxon>Spermatophyta</taxon>
        <taxon>Magnoliopsida</taxon>
        <taxon>eudicotyledons</taxon>
        <taxon>Gunneridae</taxon>
        <taxon>Pentapetalae</taxon>
        <taxon>rosids</taxon>
        <taxon>malvids</taxon>
        <taxon>Brassicales</taxon>
        <taxon>Brassicaceae</taxon>
        <taxon>Camelineae</taxon>
        <taxon>Arabidopsis</taxon>
    </lineage>
</organism>